<evidence type="ECO:0000250" key="1"/>
<evidence type="ECO:0000255" key="2"/>
<evidence type="ECO:0000305" key="3"/>
<comment type="subcellular location">
    <subcellularLocation>
        <location evidence="1">Secreted</location>
    </subcellularLocation>
</comment>
<comment type="tissue specificity">
    <text>Expressed by the venom gland.</text>
</comment>
<comment type="domain">
    <text evidence="1">The presence of a 'disulfide through disulfide knot' structurally defines this protein as a knottin.</text>
</comment>
<comment type="similarity">
    <text evidence="3">Belongs to the neurotoxin 19 (CSTX) family. 01 subfamily.</text>
</comment>
<reference key="1">
    <citation type="journal article" date="2010" name="Zoology">
        <title>Transcriptome analysis of the venom glands of the Chinese wolf spider Lycosa singoriensis.</title>
        <authorList>
            <person name="Zhang Y."/>
            <person name="Chen J."/>
            <person name="Tang X."/>
            <person name="Wang F."/>
            <person name="Jiang L."/>
            <person name="Xiong X."/>
            <person name="Wang M."/>
            <person name="Rong M."/>
            <person name="Liu Z."/>
            <person name="Liang S."/>
        </authorList>
    </citation>
    <scope>NUCLEOTIDE SEQUENCE [LARGE SCALE MRNA]</scope>
    <source>
        <tissue>Venom gland</tissue>
    </source>
</reference>
<name>TX333_LYCSI</name>
<sequence>MKFVLLFGVLLVTLFSYSSAEMFDDFDQADEDELLSLIEKEEARAKECTPRFYDCSHDRHSCCRSELFKDVCTCFYPEGGDNEVCTCQQPKHLKYMEKAAGKAKKFGGKIKKWFG</sequence>
<proteinExistence type="evidence at transcript level"/>
<keyword id="KW-1015">Disulfide bond</keyword>
<keyword id="KW-0960">Knottin</keyword>
<keyword id="KW-0964">Secreted</keyword>
<keyword id="KW-0732">Signal</keyword>
<keyword id="KW-0800">Toxin</keyword>
<protein>
    <recommendedName>
        <fullName>U3-lycotoxin-Ls1k</fullName>
    </recommendedName>
    <alternativeName>
        <fullName>Toxin-like structure LSTX-B33</fullName>
    </alternativeName>
</protein>
<organism>
    <name type="scientific">Lycosa singoriensis</name>
    <name type="common">Wolf spider</name>
    <name type="synonym">Aranea singoriensis</name>
    <dbReference type="NCBI Taxonomy" id="434756"/>
    <lineage>
        <taxon>Eukaryota</taxon>
        <taxon>Metazoa</taxon>
        <taxon>Ecdysozoa</taxon>
        <taxon>Arthropoda</taxon>
        <taxon>Chelicerata</taxon>
        <taxon>Arachnida</taxon>
        <taxon>Araneae</taxon>
        <taxon>Araneomorphae</taxon>
        <taxon>Entelegynae</taxon>
        <taxon>Lycosoidea</taxon>
        <taxon>Lycosidae</taxon>
        <taxon>Lycosa</taxon>
    </lineage>
</organism>
<accession>B6DCS8</accession>
<dbReference type="EMBL" id="EU926012">
    <property type="protein sequence ID" value="ACI41344.1"/>
    <property type="molecule type" value="mRNA"/>
</dbReference>
<dbReference type="EMBL" id="FM864016">
    <property type="protein sequence ID" value="CAS03614.1"/>
    <property type="molecule type" value="mRNA"/>
</dbReference>
<dbReference type="SMR" id="B6DCS8"/>
<dbReference type="ArachnoServer" id="AS000953">
    <property type="toxin name" value="U3-lycotoxin-Ls1k"/>
</dbReference>
<dbReference type="GO" id="GO:0005576">
    <property type="term" value="C:extracellular region"/>
    <property type="evidence" value="ECO:0007669"/>
    <property type="project" value="UniProtKB-SubCell"/>
</dbReference>
<dbReference type="GO" id="GO:0090729">
    <property type="term" value="F:toxin activity"/>
    <property type="evidence" value="ECO:0007669"/>
    <property type="project" value="UniProtKB-KW"/>
</dbReference>
<dbReference type="InterPro" id="IPR019553">
    <property type="entry name" value="Spider_toxin_CSTX_knottin"/>
</dbReference>
<dbReference type="InterPro" id="IPR011142">
    <property type="entry name" value="Spider_toxin_CSTX_Knottin_CS"/>
</dbReference>
<dbReference type="Pfam" id="PF10530">
    <property type="entry name" value="Toxin_35"/>
    <property type="match status" value="1"/>
</dbReference>
<dbReference type="PROSITE" id="PS60029">
    <property type="entry name" value="SPIDER_CSTX"/>
    <property type="match status" value="1"/>
</dbReference>
<feature type="signal peptide" evidence="2">
    <location>
        <begin position="1"/>
        <end position="20"/>
    </location>
</feature>
<feature type="propeptide" id="PRO_0000401669" evidence="1">
    <location>
        <begin position="21"/>
        <end position="44"/>
    </location>
</feature>
<feature type="chain" id="PRO_0000401670" description="U3-lycotoxin-Ls1k">
    <location>
        <begin position="45"/>
        <end position="115"/>
    </location>
</feature>
<feature type="disulfide bond" evidence="1">
    <location>
        <begin position="48"/>
        <end position="63"/>
    </location>
</feature>
<feature type="disulfide bond" evidence="1">
    <location>
        <begin position="55"/>
        <end position="72"/>
    </location>
</feature>
<feature type="disulfide bond" evidence="1">
    <location>
        <begin position="62"/>
        <end position="87"/>
    </location>
</feature>
<feature type="disulfide bond" evidence="1">
    <location>
        <begin position="74"/>
        <end position="85"/>
    </location>
</feature>